<evidence type="ECO:0000250" key="1"/>
<evidence type="ECO:0000250" key="2">
    <source>
        <dbReference type="UniProtKB" id="P00157"/>
    </source>
</evidence>
<evidence type="ECO:0000255" key="3">
    <source>
        <dbReference type="PROSITE-ProRule" id="PRU00967"/>
    </source>
</evidence>
<evidence type="ECO:0000255" key="4">
    <source>
        <dbReference type="PROSITE-ProRule" id="PRU00968"/>
    </source>
</evidence>
<dbReference type="EMBL" id="AB051239">
    <property type="protein sequence ID" value="BAB18191.1"/>
    <property type="molecule type" value="Genomic_DNA"/>
</dbReference>
<dbReference type="SMR" id="Q9GBG9"/>
<dbReference type="GO" id="GO:0005743">
    <property type="term" value="C:mitochondrial inner membrane"/>
    <property type="evidence" value="ECO:0007669"/>
    <property type="project" value="UniProtKB-SubCell"/>
</dbReference>
<dbReference type="GO" id="GO:0045275">
    <property type="term" value="C:respiratory chain complex III"/>
    <property type="evidence" value="ECO:0007669"/>
    <property type="project" value="InterPro"/>
</dbReference>
<dbReference type="GO" id="GO:0046872">
    <property type="term" value="F:metal ion binding"/>
    <property type="evidence" value="ECO:0007669"/>
    <property type="project" value="UniProtKB-KW"/>
</dbReference>
<dbReference type="GO" id="GO:0008121">
    <property type="term" value="F:ubiquinol-cytochrome-c reductase activity"/>
    <property type="evidence" value="ECO:0007669"/>
    <property type="project" value="InterPro"/>
</dbReference>
<dbReference type="GO" id="GO:0006122">
    <property type="term" value="P:mitochondrial electron transport, ubiquinol to cytochrome c"/>
    <property type="evidence" value="ECO:0007669"/>
    <property type="project" value="TreeGrafter"/>
</dbReference>
<dbReference type="CDD" id="cd00290">
    <property type="entry name" value="cytochrome_b_C"/>
    <property type="match status" value="1"/>
</dbReference>
<dbReference type="CDD" id="cd00284">
    <property type="entry name" value="Cytochrome_b_N"/>
    <property type="match status" value="1"/>
</dbReference>
<dbReference type="FunFam" id="1.20.810.10:FF:000002">
    <property type="entry name" value="Cytochrome b"/>
    <property type="match status" value="1"/>
</dbReference>
<dbReference type="Gene3D" id="1.20.810.10">
    <property type="entry name" value="Cytochrome Bc1 Complex, Chain C"/>
    <property type="match status" value="1"/>
</dbReference>
<dbReference type="InterPro" id="IPR005798">
    <property type="entry name" value="Cyt_b/b6_C"/>
</dbReference>
<dbReference type="InterPro" id="IPR036150">
    <property type="entry name" value="Cyt_b/b6_C_sf"/>
</dbReference>
<dbReference type="InterPro" id="IPR005797">
    <property type="entry name" value="Cyt_b/b6_N"/>
</dbReference>
<dbReference type="InterPro" id="IPR027387">
    <property type="entry name" value="Cytb/b6-like_sf"/>
</dbReference>
<dbReference type="InterPro" id="IPR030689">
    <property type="entry name" value="Cytochrome_b"/>
</dbReference>
<dbReference type="InterPro" id="IPR048260">
    <property type="entry name" value="Cytochrome_b_C_euk/bac"/>
</dbReference>
<dbReference type="InterPro" id="IPR048259">
    <property type="entry name" value="Cytochrome_b_N_euk/bac"/>
</dbReference>
<dbReference type="InterPro" id="IPR016174">
    <property type="entry name" value="Di-haem_cyt_TM"/>
</dbReference>
<dbReference type="PANTHER" id="PTHR19271">
    <property type="entry name" value="CYTOCHROME B"/>
    <property type="match status" value="1"/>
</dbReference>
<dbReference type="PANTHER" id="PTHR19271:SF16">
    <property type="entry name" value="CYTOCHROME B"/>
    <property type="match status" value="1"/>
</dbReference>
<dbReference type="Pfam" id="PF00032">
    <property type="entry name" value="Cytochrom_B_C"/>
    <property type="match status" value="1"/>
</dbReference>
<dbReference type="Pfam" id="PF00033">
    <property type="entry name" value="Cytochrome_B"/>
    <property type="match status" value="1"/>
</dbReference>
<dbReference type="PIRSF" id="PIRSF038885">
    <property type="entry name" value="COB"/>
    <property type="match status" value="1"/>
</dbReference>
<dbReference type="SUPFAM" id="SSF81648">
    <property type="entry name" value="a domain/subunit of cytochrome bc1 complex (Ubiquinol-cytochrome c reductase)"/>
    <property type="match status" value="1"/>
</dbReference>
<dbReference type="SUPFAM" id="SSF81342">
    <property type="entry name" value="Transmembrane di-heme cytochromes"/>
    <property type="match status" value="1"/>
</dbReference>
<dbReference type="PROSITE" id="PS51003">
    <property type="entry name" value="CYTB_CTER"/>
    <property type="match status" value="1"/>
</dbReference>
<dbReference type="PROSITE" id="PS51002">
    <property type="entry name" value="CYTB_NTER"/>
    <property type="match status" value="1"/>
</dbReference>
<comment type="function">
    <text evidence="2">Component of the ubiquinol-cytochrome c reductase complex (complex III or cytochrome b-c1 complex) that is part of the mitochondrial respiratory chain. The b-c1 complex mediates electron transfer from ubiquinol to cytochrome c. Contributes to the generation of a proton gradient across the mitochondrial membrane that is then used for ATP synthesis.</text>
</comment>
<comment type="cofactor">
    <cofactor evidence="2">
        <name>heme b</name>
        <dbReference type="ChEBI" id="CHEBI:60344"/>
    </cofactor>
    <text evidence="2">Binds 2 heme b groups non-covalently.</text>
</comment>
<comment type="subunit">
    <text evidence="2">The cytochrome bc1 complex contains 11 subunits: 3 respiratory subunits (MT-CYB, CYC1 and UQCRFS1), 2 core proteins (UQCRC1 and UQCRC2) and 6 low-molecular weight proteins (UQCRH/QCR6, UQCRB/QCR7, UQCRQ/QCR8, UQCR10/QCR9, UQCR11/QCR10 and a cleavage product of UQCRFS1). This cytochrome bc1 complex then forms a dimer.</text>
</comment>
<comment type="subcellular location">
    <subcellularLocation>
        <location evidence="2">Mitochondrion inner membrane</location>
        <topology evidence="2">Multi-pass membrane protein</topology>
    </subcellularLocation>
</comment>
<comment type="miscellaneous">
    <text evidence="1">Heme 1 (or BL or b562) is low-potential and absorbs at about 562 nm, and heme 2 (or BH or b566) is high-potential and absorbs at about 566 nm.</text>
</comment>
<comment type="similarity">
    <text evidence="3 4">Belongs to the cytochrome b family.</text>
</comment>
<comment type="caution">
    <text evidence="2">The full-length protein contains only eight transmembrane helices, not nine as predicted by bioinformatics tools.</text>
</comment>
<sequence length="379" mass="42591">MTNIRKTHPLTKIINNSFIDLPAPSNISAWWNFGSLLGICLIIQILTGLFLAMHYTSDTATAFSSVTHICRDVNYGWIIRYMHANGASMFFICLFLHVGRGLYYGSYMFSETWNIGIILLFAVMATAFMGYVLPWGQMSFWGATVITNLLSAIPYIGTSLVEWIWGGFSVDKATLTRFFAFHFILPFIISALAAVHLLFLHETGSNNPSGIPSDSDKIPFHPYYTIKDILGALFLILTLMLLVLFSPDLLGDPDNYIPANPLNTPPHIKPEWYFLFAYAILRSIPAKLGGVLALVFSILVLAIIPLLHTSKQRSMTFRPLSQCLFWLLVADLLTLTWIGGQPVEHPFITIGQLASILYFMILLVLMPIISIIENNMLKW</sequence>
<keyword id="KW-0249">Electron transport</keyword>
<keyword id="KW-0349">Heme</keyword>
<keyword id="KW-0408">Iron</keyword>
<keyword id="KW-0472">Membrane</keyword>
<keyword id="KW-0479">Metal-binding</keyword>
<keyword id="KW-0496">Mitochondrion</keyword>
<keyword id="KW-0999">Mitochondrion inner membrane</keyword>
<keyword id="KW-0679">Respiratory chain</keyword>
<keyword id="KW-0812">Transmembrane</keyword>
<keyword id="KW-1133">Transmembrane helix</keyword>
<keyword id="KW-0813">Transport</keyword>
<keyword id="KW-0830">Ubiquinone</keyword>
<protein>
    <recommendedName>
        <fullName>Cytochrome b</fullName>
    </recommendedName>
    <alternativeName>
        <fullName>Complex III subunit 3</fullName>
    </alternativeName>
    <alternativeName>
        <fullName>Complex III subunit III</fullName>
    </alternativeName>
    <alternativeName>
        <fullName>Cytochrome b-c1 complex subunit 3</fullName>
    </alternativeName>
    <alternativeName>
        <fullName>Ubiquinol-cytochrome-c reductase complex cytochrome b subunit</fullName>
    </alternativeName>
</protein>
<name>CYB_MUSAL</name>
<gene>
    <name type="primary">MT-CYB</name>
    <name type="synonym">COB</name>
    <name type="synonym">CYTB</name>
    <name type="synonym">MTCYB</name>
</gene>
<reference key="1">
    <citation type="journal article" date="2000" name="Genes Genet. Syst.">
        <title>Evolutionary trends of the mitochondrial lineage differentiation in species of genera Martes and Mustela.</title>
        <authorList>
            <person name="Hosoda T."/>
            <person name="Suzuki H."/>
            <person name="Harada M."/>
            <person name="Tsuchiya K."/>
            <person name="Han S.H."/>
            <person name="Zhang Y."/>
            <person name="Kryukov A.P."/>
            <person name="Lin L.K."/>
        </authorList>
    </citation>
    <scope>NUCLEOTIDE SEQUENCE [GENOMIC DNA]</scope>
</reference>
<proteinExistence type="inferred from homology"/>
<accession>Q9GBG9</accession>
<organism>
    <name type="scientific">Mustela altaica</name>
    <name type="common">Mountain weasel</name>
    <dbReference type="NCBI Taxonomy" id="92062"/>
    <lineage>
        <taxon>Eukaryota</taxon>
        <taxon>Metazoa</taxon>
        <taxon>Chordata</taxon>
        <taxon>Craniata</taxon>
        <taxon>Vertebrata</taxon>
        <taxon>Euteleostomi</taxon>
        <taxon>Mammalia</taxon>
        <taxon>Eutheria</taxon>
        <taxon>Laurasiatheria</taxon>
        <taxon>Carnivora</taxon>
        <taxon>Caniformia</taxon>
        <taxon>Musteloidea</taxon>
        <taxon>Mustelidae</taxon>
        <taxon>Mustelinae</taxon>
        <taxon>Mustela</taxon>
    </lineage>
</organism>
<geneLocation type="mitochondrion"/>
<feature type="chain" id="PRO_0000247331" description="Cytochrome b">
    <location>
        <begin position="1"/>
        <end position="379"/>
    </location>
</feature>
<feature type="transmembrane region" description="Helical" evidence="2">
    <location>
        <begin position="33"/>
        <end position="53"/>
    </location>
</feature>
<feature type="transmembrane region" description="Helical" evidence="2">
    <location>
        <begin position="77"/>
        <end position="98"/>
    </location>
</feature>
<feature type="transmembrane region" description="Helical" evidence="2">
    <location>
        <begin position="113"/>
        <end position="133"/>
    </location>
</feature>
<feature type="transmembrane region" description="Helical" evidence="2">
    <location>
        <begin position="178"/>
        <end position="198"/>
    </location>
</feature>
<feature type="transmembrane region" description="Helical" evidence="2">
    <location>
        <begin position="226"/>
        <end position="246"/>
    </location>
</feature>
<feature type="transmembrane region" description="Helical" evidence="2">
    <location>
        <begin position="288"/>
        <end position="308"/>
    </location>
</feature>
<feature type="transmembrane region" description="Helical" evidence="2">
    <location>
        <begin position="320"/>
        <end position="340"/>
    </location>
</feature>
<feature type="transmembrane region" description="Helical" evidence="2">
    <location>
        <begin position="347"/>
        <end position="367"/>
    </location>
</feature>
<feature type="binding site" description="axial binding residue" evidence="2">
    <location>
        <position position="83"/>
    </location>
    <ligand>
        <name>heme b</name>
        <dbReference type="ChEBI" id="CHEBI:60344"/>
        <label>b562</label>
    </ligand>
    <ligandPart>
        <name>Fe</name>
        <dbReference type="ChEBI" id="CHEBI:18248"/>
    </ligandPart>
</feature>
<feature type="binding site" description="axial binding residue" evidence="2">
    <location>
        <position position="97"/>
    </location>
    <ligand>
        <name>heme b</name>
        <dbReference type="ChEBI" id="CHEBI:60344"/>
        <label>b566</label>
    </ligand>
    <ligandPart>
        <name>Fe</name>
        <dbReference type="ChEBI" id="CHEBI:18248"/>
    </ligandPart>
</feature>
<feature type="binding site" description="axial binding residue" evidence="2">
    <location>
        <position position="182"/>
    </location>
    <ligand>
        <name>heme b</name>
        <dbReference type="ChEBI" id="CHEBI:60344"/>
        <label>b562</label>
    </ligand>
    <ligandPart>
        <name>Fe</name>
        <dbReference type="ChEBI" id="CHEBI:18248"/>
    </ligandPart>
</feature>
<feature type="binding site" description="axial binding residue" evidence="2">
    <location>
        <position position="196"/>
    </location>
    <ligand>
        <name>heme b</name>
        <dbReference type="ChEBI" id="CHEBI:60344"/>
        <label>b566</label>
    </ligand>
    <ligandPart>
        <name>Fe</name>
        <dbReference type="ChEBI" id="CHEBI:18248"/>
    </ligandPart>
</feature>
<feature type="binding site" evidence="2">
    <location>
        <position position="201"/>
    </location>
    <ligand>
        <name>a ubiquinone</name>
        <dbReference type="ChEBI" id="CHEBI:16389"/>
    </ligand>
</feature>